<sequence>MIPGEIITKSTEVEINNHHPETVIEVENTGDRPIQVGSHFHFYEANAALDFEREMAYGKHLDIPAGAAVRFEPGDKKEVQLVEYAGKRKIFGFRGMVNGPIDESRVYRPTDENDAYAGVFGDNGAENVNKKGGKRS</sequence>
<evidence type="ECO:0000255" key="1">
    <source>
        <dbReference type="HAMAP-Rule" id="MF_01954"/>
    </source>
</evidence>
<reference key="1">
    <citation type="journal article" date="2001" name="Lancet">
        <title>Whole genome sequencing of meticillin-resistant Staphylococcus aureus.</title>
        <authorList>
            <person name="Kuroda M."/>
            <person name="Ohta T."/>
            <person name="Uchiyama I."/>
            <person name="Baba T."/>
            <person name="Yuzawa H."/>
            <person name="Kobayashi I."/>
            <person name="Cui L."/>
            <person name="Oguchi A."/>
            <person name="Aoki K."/>
            <person name="Nagai Y."/>
            <person name="Lian J.-Q."/>
            <person name="Ito T."/>
            <person name="Kanamori M."/>
            <person name="Matsumaru H."/>
            <person name="Maruyama A."/>
            <person name="Murakami H."/>
            <person name="Hosoyama A."/>
            <person name="Mizutani-Ui Y."/>
            <person name="Takahashi N.K."/>
            <person name="Sawano T."/>
            <person name="Inoue R."/>
            <person name="Kaito C."/>
            <person name="Sekimizu K."/>
            <person name="Hirakawa H."/>
            <person name="Kuhara S."/>
            <person name="Goto S."/>
            <person name="Yabuzaki J."/>
            <person name="Kanehisa M."/>
            <person name="Yamashita A."/>
            <person name="Oshima K."/>
            <person name="Furuya K."/>
            <person name="Yoshino C."/>
            <person name="Shiba T."/>
            <person name="Hattori M."/>
            <person name="Ogasawara N."/>
            <person name="Hayashi H."/>
            <person name="Hiramatsu K."/>
        </authorList>
    </citation>
    <scope>NUCLEOTIDE SEQUENCE [LARGE SCALE GENOMIC DNA]</scope>
    <source>
        <strain>Mu50 / ATCC 700699</strain>
    </source>
</reference>
<organism>
    <name type="scientific">Staphylococcus aureus (strain Mu50 / ATCC 700699)</name>
    <dbReference type="NCBI Taxonomy" id="158878"/>
    <lineage>
        <taxon>Bacteria</taxon>
        <taxon>Bacillati</taxon>
        <taxon>Bacillota</taxon>
        <taxon>Bacilli</taxon>
        <taxon>Bacillales</taxon>
        <taxon>Staphylococcaceae</taxon>
        <taxon>Staphylococcus</taxon>
    </lineage>
</organism>
<name>URE2_STAAM</name>
<accession>P67406</accession>
<accession>Q99RY3</accession>
<dbReference type="EC" id="3.5.1.5" evidence="1"/>
<dbReference type="EMBL" id="BA000017">
    <property type="protein sequence ID" value="BAB58451.1"/>
    <property type="molecule type" value="Genomic_DNA"/>
</dbReference>
<dbReference type="RefSeq" id="WP_000612126.1">
    <property type="nucleotide sequence ID" value="NC_002758.2"/>
</dbReference>
<dbReference type="SMR" id="P67406"/>
<dbReference type="KEGG" id="sav:SAV2289"/>
<dbReference type="HOGENOM" id="CLU_129707_2_2_9"/>
<dbReference type="PhylomeDB" id="P67406"/>
<dbReference type="UniPathway" id="UPA00258">
    <property type="reaction ID" value="UER00370"/>
</dbReference>
<dbReference type="Proteomes" id="UP000002481">
    <property type="component" value="Chromosome"/>
</dbReference>
<dbReference type="GO" id="GO:0035550">
    <property type="term" value="C:urease complex"/>
    <property type="evidence" value="ECO:0007669"/>
    <property type="project" value="InterPro"/>
</dbReference>
<dbReference type="GO" id="GO:0009039">
    <property type="term" value="F:urease activity"/>
    <property type="evidence" value="ECO:0007669"/>
    <property type="project" value="UniProtKB-UniRule"/>
</dbReference>
<dbReference type="GO" id="GO:0043419">
    <property type="term" value="P:urea catabolic process"/>
    <property type="evidence" value="ECO:0007669"/>
    <property type="project" value="UniProtKB-UniRule"/>
</dbReference>
<dbReference type="CDD" id="cd00407">
    <property type="entry name" value="Urease_beta"/>
    <property type="match status" value="1"/>
</dbReference>
<dbReference type="FunFam" id="2.10.150.10:FF:000001">
    <property type="entry name" value="Urease subunit beta"/>
    <property type="match status" value="1"/>
</dbReference>
<dbReference type="Gene3D" id="2.10.150.10">
    <property type="entry name" value="Urease, beta subunit"/>
    <property type="match status" value="1"/>
</dbReference>
<dbReference type="HAMAP" id="MF_01954">
    <property type="entry name" value="Urease_beta"/>
    <property type="match status" value="1"/>
</dbReference>
<dbReference type="InterPro" id="IPR002019">
    <property type="entry name" value="Urease_beta-like"/>
</dbReference>
<dbReference type="InterPro" id="IPR036461">
    <property type="entry name" value="Urease_betasu_sf"/>
</dbReference>
<dbReference type="InterPro" id="IPR050069">
    <property type="entry name" value="Urease_subunit"/>
</dbReference>
<dbReference type="NCBIfam" id="NF009682">
    <property type="entry name" value="PRK13203.1"/>
    <property type="match status" value="1"/>
</dbReference>
<dbReference type="NCBIfam" id="TIGR00192">
    <property type="entry name" value="urease_beta"/>
    <property type="match status" value="1"/>
</dbReference>
<dbReference type="PANTHER" id="PTHR33569">
    <property type="entry name" value="UREASE"/>
    <property type="match status" value="1"/>
</dbReference>
<dbReference type="PANTHER" id="PTHR33569:SF1">
    <property type="entry name" value="UREASE"/>
    <property type="match status" value="1"/>
</dbReference>
<dbReference type="Pfam" id="PF00699">
    <property type="entry name" value="Urease_beta"/>
    <property type="match status" value="1"/>
</dbReference>
<dbReference type="SUPFAM" id="SSF51278">
    <property type="entry name" value="Urease, beta-subunit"/>
    <property type="match status" value="1"/>
</dbReference>
<proteinExistence type="inferred from homology"/>
<protein>
    <recommendedName>
        <fullName evidence="1">Urease subunit beta</fullName>
        <ecNumber evidence="1">3.5.1.5</ecNumber>
    </recommendedName>
    <alternativeName>
        <fullName evidence="1">Urea amidohydrolase subunit beta</fullName>
    </alternativeName>
</protein>
<gene>
    <name evidence="1" type="primary">ureB</name>
    <name type="ordered locus">SAV2289</name>
</gene>
<feature type="chain" id="PRO_0000067588" description="Urease subunit beta">
    <location>
        <begin position="1"/>
        <end position="136"/>
    </location>
</feature>
<comment type="catalytic activity">
    <reaction evidence="1">
        <text>urea + 2 H2O + H(+) = hydrogencarbonate + 2 NH4(+)</text>
        <dbReference type="Rhea" id="RHEA:20557"/>
        <dbReference type="ChEBI" id="CHEBI:15377"/>
        <dbReference type="ChEBI" id="CHEBI:15378"/>
        <dbReference type="ChEBI" id="CHEBI:16199"/>
        <dbReference type="ChEBI" id="CHEBI:17544"/>
        <dbReference type="ChEBI" id="CHEBI:28938"/>
        <dbReference type="EC" id="3.5.1.5"/>
    </reaction>
</comment>
<comment type="pathway">
    <text evidence="1">Nitrogen metabolism; urea degradation; CO(2) and NH(3) from urea (urease route): step 1/1.</text>
</comment>
<comment type="subunit">
    <text evidence="1">Heterotrimer of UreA (gamma), UreB (beta) and UreC (alpha) subunits. Three heterotrimers associate to form the active enzyme.</text>
</comment>
<comment type="subcellular location">
    <subcellularLocation>
        <location evidence="1">Cytoplasm</location>
    </subcellularLocation>
</comment>
<comment type="similarity">
    <text evidence="1">Belongs to the urease beta subunit family.</text>
</comment>
<keyword id="KW-0963">Cytoplasm</keyword>
<keyword id="KW-0378">Hydrolase</keyword>